<dbReference type="EMBL" id="CU459141">
    <property type="protein sequence ID" value="CAM88245.1"/>
    <property type="molecule type" value="Genomic_DNA"/>
</dbReference>
<dbReference type="RefSeq" id="WP_001979301.1">
    <property type="nucleotide sequence ID" value="NZ_JBDGFB010000003.1"/>
</dbReference>
<dbReference type="SMR" id="B0VE54"/>
<dbReference type="EnsemblBacteria" id="CAM88245">
    <property type="protein sequence ID" value="CAM88245"/>
    <property type="gene ID" value="ABAYE3454"/>
</dbReference>
<dbReference type="KEGG" id="aby:ABAYE3454"/>
<dbReference type="HOGENOM" id="CLU_057596_1_0_6"/>
<dbReference type="GO" id="GO:0005829">
    <property type="term" value="C:cytosol"/>
    <property type="evidence" value="ECO:0007669"/>
    <property type="project" value="TreeGrafter"/>
</dbReference>
<dbReference type="Gene3D" id="3.40.1740.10">
    <property type="entry name" value="VC0467-like"/>
    <property type="match status" value="1"/>
</dbReference>
<dbReference type="HAMAP" id="MF_00758">
    <property type="entry name" value="UPF0301"/>
    <property type="match status" value="1"/>
</dbReference>
<dbReference type="InterPro" id="IPR003774">
    <property type="entry name" value="AlgH-like"/>
</dbReference>
<dbReference type="NCBIfam" id="NF001266">
    <property type="entry name" value="PRK00228.1-1"/>
    <property type="match status" value="1"/>
</dbReference>
<dbReference type="PANTHER" id="PTHR30327">
    <property type="entry name" value="UNCHARACTERIZED PROTEIN YQGE"/>
    <property type="match status" value="1"/>
</dbReference>
<dbReference type="PANTHER" id="PTHR30327:SF1">
    <property type="entry name" value="UPF0301 PROTEIN YQGE"/>
    <property type="match status" value="1"/>
</dbReference>
<dbReference type="Pfam" id="PF02622">
    <property type="entry name" value="DUF179"/>
    <property type="match status" value="1"/>
</dbReference>
<dbReference type="SUPFAM" id="SSF143456">
    <property type="entry name" value="VC0467-like"/>
    <property type="match status" value="1"/>
</dbReference>
<comment type="similarity">
    <text evidence="1">Belongs to the UPF0301 (AlgH) family.</text>
</comment>
<name>Y3454_ACIBY</name>
<sequence length="184" mass="20500">MTKQYMTHRCLIAPPEMADDFFANTVIYLARHDEEGAQGIIINRPAGIQIKELLNDLDIDADNVNPHEVLQGGPLRPEAGFVLHTGQPTWHSSIAVGENVCITTSKDILDAIAHNEGVGRYQIALGYASWGKNQLEDEIARGDWLICDADMDLIFNLPYDDRWDAAYKKIGVDRTWLASEIGHA</sequence>
<feature type="chain" id="PRO_1000198247" description="UPF0301 protein ABAYE3454">
    <location>
        <begin position="1"/>
        <end position="184"/>
    </location>
</feature>
<protein>
    <recommendedName>
        <fullName evidence="1">UPF0301 protein ABAYE3454</fullName>
    </recommendedName>
</protein>
<gene>
    <name type="ordered locus">ABAYE3454</name>
</gene>
<proteinExistence type="inferred from homology"/>
<organism>
    <name type="scientific">Acinetobacter baumannii (strain AYE)</name>
    <dbReference type="NCBI Taxonomy" id="509173"/>
    <lineage>
        <taxon>Bacteria</taxon>
        <taxon>Pseudomonadati</taxon>
        <taxon>Pseudomonadota</taxon>
        <taxon>Gammaproteobacteria</taxon>
        <taxon>Moraxellales</taxon>
        <taxon>Moraxellaceae</taxon>
        <taxon>Acinetobacter</taxon>
        <taxon>Acinetobacter calcoaceticus/baumannii complex</taxon>
    </lineage>
</organism>
<accession>B0VE54</accession>
<evidence type="ECO:0000255" key="1">
    <source>
        <dbReference type="HAMAP-Rule" id="MF_00758"/>
    </source>
</evidence>
<reference key="1">
    <citation type="journal article" date="2008" name="PLoS ONE">
        <title>Comparative analysis of Acinetobacters: three genomes for three lifestyles.</title>
        <authorList>
            <person name="Vallenet D."/>
            <person name="Nordmann P."/>
            <person name="Barbe V."/>
            <person name="Poirel L."/>
            <person name="Mangenot S."/>
            <person name="Bataille E."/>
            <person name="Dossat C."/>
            <person name="Gas S."/>
            <person name="Kreimeyer A."/>
            <person name="Lenoble P."/>
            <person name="Oztas S."/>
            <person name="Poulain J."/>
            <person name="Segurens B."/>
            <person name="Robert C."/>
            <person name="Abergel C."/>
            <person name="Claverie J.-M."/>
            <person name="Raoult D."/>
            <person name="Medigue C."/>
            <person name="Weissenbach J."/>
            <person name="Cruveiller S."/>
        </authorList>
    </citation>
    <scope>NUCLEOTIDE SEQUENCE [LARGE SCALE GENOMIC DNA]</scope>
    <source>
        <strain>AYE</strain>
    </source>
</reference>